<sequence length="205" mass="23670">MVEPREQFFQDLLSAVDQQMDTVKNDIKDIMKEKTSFMVSFENFIERYDTMEKNIQDLQNKYEEMAANLMTVMTDTKIQLGAIIAQLEILMINGTPLPAKKTTIKEAMPLPSSNTNNDQTSPPASGKTSETPKKNPTNAMFFTRSEWASSKTFREKFLTPEIQAILDEQFANKTGIERLHAEGLYMWRTQFSDEQKKMVKEMMKK</sequence>
<protein>
    <recommendedName>
        <fullName>Uncharacterized protein K205R</fullName>
        <shortName>pK205R</shortName>
    </recommendedName>
</protein>
<evidence type="ECO:0000255" key="1"/>
<evidence type="ECO:0000256" key="2">
    <source>
        <dbReference type="SAM" id="MobiDB-lite"/>
    </source>
</evidence>
<evidence type="ECO:0000269" key="3">
    <source>
    </source>
</evidence>
<evidence type="ECO:0000269" key="4">
    <source>
    </source>
</evidence>
<evidence type="ECO:0000305" key="5"/>
<dbReference type="EMBL" id="U18466">
    <property type="protein sequence ID" value="AAA65278.1"/>
    <property type="molecule type" value="Genomic_DNA"/>
</dbReference>
<dbReference type="RefSeq" id="NP_042742.1">
    <property type="nucleotide sequence ID" value="NC_001659.2"/>
</dbReference>
<dbReference type="SMR" id="Q65147"/>
<dbReference type="GeneID" id="22220430"/>
<dbReference type="KEGG" id="vg:22220430"/>
<dbReference type="Proteomes" id="UP000000624">
    <property type="component" value="Segment"/>
</dbReference>
<dbReference type="GO" id="GO:0030430">
    <property type="term" value="C:host cell cytoplasm"/>
    <property type="evidence" value="ECO:0007669"/>
    <property type="project" value="UniProtKB-SubCell"/>
</dbReference>
<dbReference type="GO" id="GO:0039520">
    <property type="term" value="P:symbiont-mediated activation of host autophagy"/>
    <property type="evidence" value="ECO:0007669"/>
    <property type="project" value="UniProtKB-KW"/>
</dbReference>
<comment type="function">
    <text evidence="4">Induces host endoplasmic reticulum stress and consequently activates autophagy and NF-kappa-B signaling pathway. In turn, may induce autophagy-mediated STING1 degradation and innate immune evasion.</text>
</comment>
<comment type="subcellular location">
    <subcellularLocation>
        <location evidence="4">Host cytoplasm</location>
    </subcellularLocation>
</comment>
<comment type="induction">
    <text evidence="3">Expressed in the early phase of the viral replicative cycle.</text>
</comment>
<comment type="similarity">
    <text evidence="5">Belongs to the asfivirus K205R family.</text>
</comment>
<feature type="chain" id="PRO_0000373586" description="Uncharacterized protein K205R">
    <location>
        <begin position="1"/>
        <end position="205"/>
    </location>
</feature>
<feature type="region of interest" description="Disordered" evidence="2">
    <location>
        <begin position="108"/>
        <end position="141"/>
    </location>
</feature>
<feature type="coiled-coil region" evidence="1">
    <location>
        <begin position="10"/>
        <end position="75"/>
    </location>
</feature>
<feature type="compositionally biased region" description="Polar residues" evidence="2">
    <location>
        <begin position="111"/>
        <end position="141"/>
    </location>
</feature>
<accession>Q65147</accession>
<organismHost>
    <name type="scientific">Ornithodoros</name>
    <name type="common">relapsing fever ticks</name>
    <dbReference type="NCBI Taxonomy" id="6937"/>
</organismHost>
<organismHost>
    <name type="scientific">Sus scrofa</name>
    <name type="common">Pig</name>
    <dbReference type="NCBI Taxonomy" id="9823"/>
</organismHost>
<reference key="1">
    <citation type="journal article" date="1995" name="Virology">
        <title>Analysis of the complete nucleotide sequence of African swine fever virus.</title>
        <authorList>
            <person name="Yanez R.J."/>
            <person name="Rodriguez J.M."/>
            <person name="Nogal M.L."/>
            <person name="Yuste L."/>
            <person name="Enriquez C."/>
            <person name="Rodriguez J.F."/>
            <person name="Vinuela E."/>
        </authorList>
    </citation>
    <scope>NUCLEOTIDE SEQUENCE [LARGE SCALE GENOMIC DNA]</scope>
</reference>
<reference key="2">
    <citation type="journal article" date="2020" name="J. Virol.">
        <title>The African Swine Fever Virus Transcriptome.</title>
        <authorList>
            <person name="Cackett G."/>
            <person name="Matelska D."/>
            <person name="Sykora M."/>
            <person name="Portugal R."/>
            <person name="Malecki M."/>
            <person name="Baehler J."/>
            <person name="Dixon L."/>
            <person name="Werner F."/>
        </authorList>
    </citation>
    <scope>INDUCTION</scope>
</reference>
<reference key="3">
    <citation type="journal article" date="2022" name="Viruses">
        <title>African Swine Fever Virus K205R Induces ER Stress and Consequently Activates Autophagy and the NF-kappaB Signaling Pathway.</title>
        <authorList>
            <person name="Wang Q."/>
            <person name="Zhou L."/>
            <person name="Wang J."/>
            <person name="Su D."/>
            <person name="Li D."/>
            <person name="Du Y."/>
            <person name="Yang G."/>
            <person name="Zhang G."/>
            <person name="Chu B."/>
        </authorList>
    </citation>
    <scope>FUNCTION</scope>
    <scope>SUBCELLULAR LOCATION</scope>
</reference>
<organism>
    <name type="scientific">African swine fever virus (strain Badajoz 1971 Vero-adapted)</name>
    <name type="common">Ba71V</name>
    <name type="synonym">ASFV</name>
    <dbReference type="NCBI Taxonomy" id="10498"/>
    <lineage>
        <taxon>Viruses</taxon>
        <taxon>Varidnaviria</taxon>
        <taxon>Bamfordvirae</taxon>
        <taxon>Nucleocytoviricota</taxon>
        <taxon>Pokkesviricetes</taxon>
        <taxon>Asfuvirales</taxon>
        <taxon>Asfarviridae</taxon>
        <taxon>Asfivirus</taxon>
        <taxon>African swine fever virus</taxon>
    </lineage>
</organism>
<proteinExistence type="evidence at transcript level"/>
<keyword id="KW-1072">Activation of host autophagy by virus</keyword>
<keyword id="KW-0175">Coiled coil</keyword>
<keyword id="KW-0244">Early protein</keyword>
<keyword id="KW-1035">Host cytoplasm</keyword>
<keyword id="KW-0945">Host-virus interaction</keyword>
<keyword id="KW-1185">Reference proteome</keyword>
<gene>
    <name type="ordered locus">Ba71V-048</name>
    <name type="ORF">K205R</name>
</gene>
<name>VF205_ASFB7</name>